<evidence type="ECO:0000250" key="1"/>
<evidence type="ECO:0000255" key="2"/>
<evidence type="ECO:0000305" key="3"/>
<name>DIK2A_XENTR</name>
<accession>B1H2T2</accession>
<gene>
    <name type="primary">dipk2a</name>
</gene>
<comment type="function">
    <text evidence="1">May play a role in cardiomyocyte proliferation through paracrine signaling and activation of the PPI3K-AKT-CDK7 signaling cascade.</text>
</comment>
<comment type="subcellular location">
    <subcellularLocation>
        <location evidence="1">Cytoplasmic vesicle</location>
        <location evidence="1">COPI-coated vesicle</location>
    </subcellularLocation>
    <subcellularLocation>
        <location evidence="1">Golgi apparatus</location>
    </subcellularLocation>
    <subcellularLocation>
        <location evidence="1">Secreted</location>
    </subcellularLocation>
</comment>
<comment type="similarity">
    <text evidence="3">Belongs to the DIPK family.</text>
</comment>
<protein>
    <recommendedName>
        <fullName evidence="3">Divergent protein kinase domain 2A</fullName>
    </recommendedName>
    <alternativeName>
        <fullName>Deleted in autism protein 1 homolog</fullName>
    </alternativeName>
</protein>
<organism>
    <name type="scientific">Xenopus tropicalis</name>
    <name type="common">Western clawed frog</name>
    <name type="synonym">Silurana tropicalis</name>
    <dbReference type="NCBI Taxonomy" id="8364"/>
    <lineage>
        <taxon>Eukaryota</taxon>
        <taxon>Metazoa</taxon>
        <taxon>Chordata</taxon>
        <taxon>Craniata</taxon>
        <taxon>Vertebrata</taxon>
        <taxon>Euteleostomi</taxon>
        <taxon>Amphibia</taxon>
        <taxon>Batrachia</taxon>
        <taxon>Anura</taxon>
        <taxon>Pipoidea</taxon>
        <taxon>Pipidae</taxon>
        <taxon>Xenopodinae</taxon>
        <taxon>Xenopus</taxon>
        <taxon>Silurana</taxon>
    </lineage>
</organism>
<dbReference type="EMBL" id="BC161119">
    <property type="protein sequence ID" value="AAI61119.1"/>
    <property type="molecule type" value="mRNA"/>
</dbReference>
<dbReference type="RefSeq" id="NP_001120404.1">
    <property type="nucleotide sequence ID" value="NM_001126932.1"/>
</dbReference>
<dbReference type="FunCoup" id="B1H2T2">
    <property type="interactions" value="431"/>
</dbReference>
<dbReference type="STRING" id="8364.ENSXETP00000029636"/>
<dbReference type="PaxDb" id="8364-ENSXETP00000003422"/>
<dbReference type="GeneID" id="100145480"/>
<dbReference type="KEGG" id="xtr:100145480"/>
<dbReference type="AGR" id="Xenbase:XB-GENE-945791"/>
<dbReference type="CTD" id="205428"/>
<dbReference type="Xenbase" id="XB-GENE-945791">
    <property type="gene designation" value="dipk2a"/>
</dbReference>
<dbReference type="eggNOG" id="ENOG502QUEB">
    <property type="taxonomic scope" value="Eukaryota"/>
</dbReference>
<dbReference type="HOGENOM" id="CLU_052524_0_0_1"/>
<dbReference type="InParanoid" id="B1H2T2"/>
<dbReference type="OMA" id="LWAACYI"/>
<dbReference type="OrthoDB" id="10035316at2759"/>
<dbReference type="PhylomeDB" id="B1H2T2"/>
<dbReference type="TreeFam" id="TF313319"/>
<dbReference type="Proteomes" id="UP000008143">
    <property type="component" value="Chromosome 5"/>
</dbReference>
<dbReference type="Bgee" id="ENSXETG00000001626">
    <property type="expression patterns" value="Expressed in 4-cell stage embryo and 12 other cell types or tissues"/>
</dbReference>
<dbReference type="ExpressionAtlas" id="B1H2T2">
    <property type="expression patterns" value="baseline"/>
</dbReference>
<dbReference type="GO" id="GO:0030137">
    <property type="term" value="C:COPI-coated vesicle"/>
    <property type="evidence" value="ECO:0007669"/>
    <property type="project" value="UniProtKB-SubCell"/>
</dbReference>
<dbReference type="GO" id="GO:0005615">
    <property type="term" value="C:extracellular space"/>
    <property type="evidence" value="ECO:0000250"/>
    <property type="project" value="UniProtKB"/>
</dbReference>
<dbReference type="GO" id="GO:0005794">
    <property type="term" value="C:Golgi apparatus"/>
    <property type="evidence" value="ECO:0007669"/>
    <property type="project" value="UniProtKB-SubCell"/>
</dbReference>
<dbReference type="GO" id="GO:0060038">
    <property type="term" value="P:cardiac muscle cell proliferation"/>
    <property type="evidence" value="ECO:0000250"/>
    <property type="project" value="UniProtKB"/>
</dbReference>
<dbReference type="GO" id="GO:0051896">
    <property type="term" value="P:regulation of phosphatidylinositol 3-kinase/protein kinase B signal transduction"/>
    <property type="evidence" value="ECO:0000250"/>
    <property type="project" value="UniProtKB"/>
</dbReference>
<dbReference type="InterPro" id="IPR020519">
    <property type="entry name" value="DIPK2A/B"/>
</dbReference>
<dbReference type="InterPro" id="IPR022049">
    <property type="entry name" value="FAM69_kinase_dom"/>
</dbReference>
<dbReference type="PANTHER" id="PTHR32073:SF6">
    <property type="entry name" value="DIVERGENT PROTEIN KINASE DOMAIN 2A"/>
    <property type="match status" value="1"/>
</dbReference>
<dbReference type="PANTHER" id="PTHR32073">
    <property type="entry name" value="GH11358P"/>
    <property type="match status" value="1"/>
</dbReference>
<dbReference type="Pfam" id="PF12260">
    <property type="entry name" value="PIP49_C"/>
    <property type="match status" value="1"/>
</dbReference>
<proteinExistence type="evidence at transcript level"/>
<reference key="1">
    <citation type="submission" date="2008-03" db="EMBL/GenBank/DDBJ databases">
        <authorList>
            <consortium name="NIH - Xenopus Gene Collection (XGC) project"/>
        </authorList>
    </citation>
    <scope>NUCLEOTIDE SEQUENCE [LARGE SCALE MRNA]</scope>
    <source>
        <tissue>Testis</tissue>
    </source>
</reference>
<keyword id="KW-0968">Cytoplasmic vesicle</keyword>
<keyword id="KW-0333">Golgi apparatus</keyword>
<keyword id="KW-1185">Reference proteome</keyword>
<keyword id="KW-0964">Secreted</keyword>
<keyword id="KW-0732">Signal</keyword>
<sequence length="429" mass="49413">MLRLASLKFGRLFRYAKVLFAASLLVVMLLNTHSLLSSFQRNELTDRRFLSLNKCPACFGTSWCRKFMNGQLSFEGWGRLRLLDFFNVKNVHFAQYGEPREGSRRVVLKRLGSNHELSELDQRICKKATGRPRCDLVQAMYKTDFARLNGDVRLLTPDVVEGWSDLVHCPSQRLLDRLVRRYAETKDSGSFLLRNLKDTERMQLLLTLAFNPEPLVLQSFPSDEGWPFAKYLGACGRMVAVNYVGEELWSYFNAPWEKRVDLAWQLMEIAEQLTNNDFDFALYLLDVSFDNFAVGPRDGKVIIVDAENVLVADKKLIKQNKPENWDVWYESKFDDCDKEACLSFSKEILCSRATVDHNYYAICQNLLSRHATWRGTSGGLLHDPPAEIAKDGRLEALLDECANPKKRYGRFKSAKELREYLAQLSNNAR</sequence>
<feature type="signal peptide" evidence="2">
    <location>
        <begin position="1"/>
        <end position="34"/>
    </location>
</feature>
<feature type="chain" id="PRO_0000353113" description="Divergent protein kinase domain 2A">
    <location>
        <begin position="35"/>
        <end position="429"/>
    </location>
</feature>